<name>NRDI_STRPG</name>
<organism>
    <name type="scientific">Streptococcus pyogenes serotype M5 (strain Manfredo)</name>
    <dbReference type="NCBI Taxonomy" id="160491"/>
    <lineage>
        <taxon>Bacteria</taxon>
        <taxon>Bacillati</taxon>
        <taxon>Bacillota</taxon>
        <taxon>Bacilli</taxon>
        <taxon>Lactobacillales</taxon>
        <taxon>Streptococcaceae</taxon>
        <taxon>Streptococcus</taxon>
    </lineage>
</organism>
<evidence type="ECO:0000255" key="1">
    <source>
        <dbReference type="HAMAP-Rule" id="MF_00128"/>
    </source>
</evidence>
<dbReference type="EMBL" id="AM295007">
    <property type="protein sequence ID" value="CAM30834.1"/>
    <property type="molecule type" value="Genomic_DNA"/>
</dbReference>
<dbReference type="RefSeq" id="WP_002990870.1">
    <property type="nucleotide sequence ID" value="NC_009332.1"/>
</dbReference>
<dbReference type="SMR" id="A2RG55"/>
<dbReference type="GeneID" id="69901324"/>
<dbReference type="KEGG" id="spf:SpyM51513"/>
<dbReference type="HOGENOM" id="CLU_114845_0_0_9"/>
<dbReference type="GO" id="GO:0010181">
    <property type="term" value="F:FMN binding"/>
    <property type="evidence" value="ECO:0007669"/>
    <property type="project" value="InterPro"/>
</dbReference>
<dbReference type="GO" id="GO:0036211">
    <property type="term" value="P:protein modification process"/>
    <property type="evidence" value="ECO:0007669"/>
    <property type="project" value="InterPro"/>
</dbReference>
<dbReference type="Gene3D" id="3.40.50.360">
    <property type="match status" value="1"/>
</dbReference>
<dbReference type="HAMAP" id="MF_00128">
    <property type="entry name" value="NrdI"/>
    <property type="match status" value="1"/>
</dbReference>
<dbReference type="InterPro" id="IPR029039">
    <property type="entry name" value="Flavoprotein-like_sf"/>
</dbReference>
<dbReference type="InterPro" id="IPR020852">
    <property type="entry name" value="RNR_Ib_NrdI_bac"/>
</dbReference>
<dbReference type="InterPro" id="IPR004465">
    <property type="entry name" value="RNR_NrdI"/>
</dbReference>
<dbReference type="NCBIfam" id="TIGR00333">
    <property type="entry name" value="nrdI"/>
    <property type="match status" value="1"/>
</dbReference>
<dbReference type="PANTHER" id="PTHR37297">
    <property type="entry name" value="PROTEIN NRDI"/>
    <property type="match status" value="1"/>
</dbReference>
<dbReference type="PANTHER" id="PTHR37297:SF1">
    <property type="entry name" value="PROTEIN NRDI"/>
    <property type="match status" value="1"/>
</dbReference>
<dbReference type="Pfam" id="PF07972">
    <property type="entry name" value="Flavodoxin_NdrI"/>
    <property type="match status" value="1"/>
</dbReference>
<dbReference type="PIRSF" id="PIRSF005087">
    <property type="entry name" value="NrdI"/>
    <property type="match status" value="1"/>
</dbReference>
<dbReference type="SUPFAM" id="SSF52218">
    <property type="entry name" value="Flavoproteins"/>
    <property type="match status" value="1"/>
</dbReference>
<comment type="function">
    <text evidence="1">Probably involved in ribonucleotide reductase function.</text>
</comment>
<comment type="similarity">
    <text evidence="1">Belongs to the NrdI family.</text>
</comment>
<gene>
    <name evidence="1" type="primary">nrdI</name>
    <name type="ordered locus">SpyM51513</name>
</gene>
<accession>A2RG55</accession>
<proteinExistence type="inferred from homology"/>
<feature type="chain" id="PRO_1000016534" description="Protein NrdI">
    <location>
        <begin position="1"/>
        <end position="162"/>
    </location>
</feature>
<reference key="1">
    <citation type="journal article" date="2007" name="J. Bacteriol.">
        <title>Complete genome of acute rheumatic fever-associated serotype M5 Streptococcus pyogenes strain Manfredo.</title>
        <authorList>
            <person name="Holden M.T.G."/>
            <person name="Scott A."/>
            <person name="Cherevach I."/>
            <person name="Chillingworth T."/>
            <person name="Churcher C."/>
            <person name="Cronin A."/>
            <person name="Dowd L."/>
            <person name="Feltwell T."/>
            <person name="Hamlin N."/>
            <person name="Holroyd S."/>
            <person name="Jagels K."/>
            <person name="Moule S."/>
            <person name="Mungall K."/>
            <person name="Quail M.A."/>
            <person name="Price C."/>
            <person name="Rabbinowitsch E."/>
            <person name="Sharp S."/>
            <person name="Skelton J."/>
            <person name="Whitehead S."/>
            <person name="Barrell B.G."/>
            <person name="Kehoe M."/>
            <person name="Parkhill J."/>
        </authorList>
    </citation>
    <scope>NUCLEOTIDE SEQUENCE [LARGE SCALE GENOMIC DNA]</scope>
    <source>
        <strain>Manfredo</strain>
    </source>
</reference>
<sequence length="162" mass="18114">MAELIIVYFSSKSNNTHRFVQKLGLPAQRIPVDNRPLEVSTHYLLIVPTYAAGGSDAKGAVPKQVIRFLNNPNNRKHCKGVISSGNTNFGDTFALAGPIISQKLQVPLLHQFELLGTATDVKKVQAIFARLKHHTHDKQKQTNNLITERTHPCHKPMRHTSH</sequence>
<protein>
    <recommendedName>
        <fullName evidence="1">Protein NrdI</fullName>
    </recommendedName>
</protein>